<protein>
    <recommendedName>
        <fullName evidence="1">Light-independent protochlorophyllide reductase subunit B</fullName>
        <shortName evidence="1">DPOR subunit B</shortName>
        <shortName evidence="1">LI-POR subunit B</shortName>
        <ecNumber evidence="1">1.3.7.7</ecNumber>
    </recommendedName>
</protein>
<comment type="function">
    <text evidence="1">Component of the dark-operative protochlorophyllide reductase (DPOR) that uses Mg-ATP and reduced ferredoxin to reduce ring D of protochlorophyllide (Pchlide) to form chlorophyllide a (Chlide). This reaction is light-independent. The NB-protein (BchN-BchB) is the catalytic component of the complex.</text>
</comment>
<comment type="catalytic activity">
    <reaction evidence="1">
        <text>chlorophyllide a + oxidized 2[4Fe-4S]-[ferredoxin] + 2 ADP + 2 phosphate = protochlorophyllide a + reduced 2[4Fe-4S]-[ferredoxin] + 2 ATP + 2 H2O</text>
        <dbReference type="Rhea" id="RHEA:28202"/>
        <dbReference type="Rhea" id="RHEA-COMP:10002"/>
        <dbReference type="Rhea" id="RHEA-COMP:10004"/>
        <dbReference type="ChEBI" id="CHEBI:15377"/>
        <dbReference type="ChEBI" id="CHEBI:30616"/>
        <dbReference type="ChEBI" id="CHEBI:33722"/>
        <dbReference type="ChEBI" id="CHEBI:33723"/>
        <dbReference type="ChEBI" id="CHEBI:43474"/>
        <dbReference type="ChEBI" id="CHEBI:83348"/>
        <dbReference type="ChEBI" id="CHEBI:83350"/>
        <dbReference type="ChEBI" id="CHEBI:456216"/>
        <dbReference type="EC" id="1.3.7.7"/>
    </reaction>
</comment>
<comment type="cofactor">
    <cofactor evidence="1">
        <name>[4Fe-4S] cluster</name>
        <dbReference type="ChEBI" id="CHEBI:49883"/>
    </cofactor>
    <text evidence="1">Binds 1 [4Fe-4S] cluster per heterodimer. The cluster is bound at the heterodimer interface by residues from both subunits.</text>
</comment>
<comment type="pathway">
    <text evidence="1">Porphyrin-containing compound metabolism; bacteriochlorophyll biosynthesis (light-independent).</text>
</comment>
<comment type="subunit">
    <text evidence="1">Protochlorophyllide reductase is composed of three subunits; BchL, BchN and BchB. Forms a heterotetramer of two BchB and two BchN subunits.</text>
</comment>
<comment type="similarity">
    <text evidence="1">Belongs to the ChlB/BchB/BchZ family.</text>
</comment>
<sequence>MRLAFWLYEGTALHGISRVTNSMKDVHTVYHAPQGDDYITATYTMLERTPQFPGLSISVVRGQDLARGESRLPATLQQVEEHYNPRMIVVAPSCSTALLQEDLEQLSRHSGVDPDKILVYDVNPFRVQEHEAAEGLFTELVKRSAQPQTLTEQPSVNLLGFTSLGFHLRSDLTSLRRILKTLGITINVVAPWGASMDDLSRLPSAWVNVVPYHEMGNGAARYLREKFGMPILSGAPMGVNPTLKWIEDLLAQINDIARERGLPLLDMPDLTEFSLDGLSAPSGVPWFARTADMESFSGKRAFVFGDATHTVGMVKFLKDELGMQIIGAGTYLSRHADWVRSELEGYLPEPLIVTDKFQEISKKIEDEMPELVCGTQMERHSCRKLDVPCMVISTPTHIEDHLIAYYPILGFEGADILADRVYTSCKLGLEKHLIDFFGDAGLEYEDDEEAVGLSTNGHAAAETETSIAGEAATVVSAEGDGMPWTDDAEKMLKKVPFFVRKKVRKNTENYAREIGETTISGDVFRKAKEALGG</sequence>
<accession>B4S592</accession>
<proteinExistence type="inferred from homology"/>
<organism>
    <name type="scientific">Prosthecochloris aestuarii (strain DSM 271 / SK 413)</name>
    <dbReference type="NCBI Taxonomy" id="290512"/>
    <lineage>
        <taxon>Bacteria</taxon>
        <taxon>Pseudomonadati</taxon>
        <taxon>Chlorobiota</taxon>
        <taxon>Chlorobiia</taxon>
        <taxon>Chlorobiales</taxon>
        <taxon>Chlorobiaceae</taxon>
        <taxon>Prosthecochloris</taxon>
    </lineage>
</organism>
<name>BCHB_PROA2</name>
<reference key="1">
    <citation type="submission" date="2008-06" db="EMBL/GenBank/DDBJ databases">
        <title>Complete sequence of chromosome of Prosthecochloris aestuarii DSM 271.</title>
        <authorList>
            <consortium name="US DOE Joint Genome Institute"/>
            <person name="Lucas S."/>
            <person name="Copeland A."/>
            <person name="Lapidus A."/>
            <person name="Glavina del Rio T."/>
            <person name="Dalin E."/>
            <person name="Tice H."/>
            <person name="Bruce D."/>
            <person name="Goodwin L."/>
            <person name="Pitluck S."/>
            <person name="Schmutz J."/>
            <person name="Larimer F."/>
            <person name="Land M."/>
            <person name="Hauser L."/>
            <person name="Kyrpides N."/>
            <person name="Anderson I."/>
            <person name="Liu Z."/>
            <person name="Li T."/>
            <person name="Zhao F."/>
            <person name="Overmann J."/>
            <person name="Bryant D.A."/>
            <person name="Richardson P."/>
        </authorList>
    </citation>
    <scope>NUCLEOTIDE SEQUENCE [LARGE SCALE GENOMIC DNA]</scope>
    <source>
        <strain>DSM 271 / SK 413</strain>
    </source>
</reference>
<dbReference type="EC" id="1.3.7.7" evidence="1"/>
<dbReference type="EMBL" id="CP001108">
    <property type="protein sequence ID" value="ACF47038.1"/>
    <property type="molecule type" value="Genomic_DNA"/>
</dbReference>
<dbReference type="RefSeq" id="WP_012506571.1">
    <property type="nucleotide sequence ID" value="NC_011059.1"/>
</dbReference>
<dbReference type="SMR" id="B4S592"/>
<dbReference type="STRING" id="290512.Paes_2028"/>
<dbReference type="KEGG" id="paa:Paes_2028"/>
<dbReference type="eggNOG" id="COG2710">
    <property type="taxonomic scope" value="Bacteria"/>
</dbReference>
<dbReference type="HOGENOM" id="CLU_025470_0_0_10"/>
<dbReference type="UniPathway" id="UPA00671"/>
<dbReference type="Proteomes" id="UP000002725">
    <property type="component" value="Chromosome"/>
</dbReference>
<dbReference type="GO" id="GO:0051539">
    <property type="term" value="F:4 iron, 4 sulfur cluster binding"/>
    <property type="evidence" value="ECO:0007669"/>
    <property type="project" value="UniProtKB-UniRule"/>
</dbReference>
<dbReference type="GO" id="GO:0005524">
    <property type="term" value="F:ATP binding"/>
    <property type="evidence" value="ECO:0007669"/>
    <property type="project" value="UniProtKB-UniRule"/>
</dbReference>
<dbReference type="GO" id="GO:0046872">
    <property type="term" value="F:metal ion binding"/>
    <property type="evidence" value="ECO:0007669"/>
    <property type="project" value="UniProtKB-KW"/>
</dbReference>
<dbReference type="GO" id="GO:0016730">
    <property type="term" value="F:oxidoreductase activity, acting on iron-sulfur proteins as donors"/>
    <property type="evidence" value="ECO:0007669"/>
    <property type="project" value="InterPro"/>
</dbReference>
<dbReference type="GO" id="GO:0016636">
    <property type="term" value="F:oxidoreductase activity, acting on the CH-CH group of donors, iron-sulfur protein as acceptor"/>
    <property type="evidence" value="ECO:0007669"/>
    <property type="project" value="UniProtKB-UniRule"/>
</dbReference>
<dbReference type="GO" id="GO:0036070">
    <property type="term" value="P:light-independent bacteriochlorophyll biosynthetic process"/>
    <property type="evidence" value="ECO:0007669"/>
    <property type="project" value="UniProtKB-UniRule"/>
</dbReference>
<dbReference type="GO" id="GO:0019685">
    <property type="term" value="P:photosynthesis, dark reaction"/>
    <property type="evidence" value="ECO:0007669"/>
    <property type="project" value="InterPro"/>
</dbReference>
<dbReference type="Gene3D" id="1.20.89.20">
    <property type="match status" value="1"/>
</dbReference>
<dbReference type="Gene3D" id="3.40.50.1980">
    <property type="entry name" value="Nitrogenase molybdenum iron protein domain"/>
    <property type="match status" value="3"/>
</dbReference>
<dbReference type="Gene3D" id="1.10.8.550">
    <property type="entry name" value="Proto-chlorophyllide reductase 57 kD subunit B"/>
    <property type="match status" value="1"/>
</dbReference>
<dbReference type="HAMAP" id="MF_00353">
    <property type="entry name" value="ChlB_BchB"/>
    <property type="match status" value="1"/>
</dbReference>
<dbReference type="InterPro" id="IPR050152">
    <property type="entry name" value="ChlB/BchB/BchZ"/>
</dbReference>
<dbReference type="InterPro" id="IPR013580">
    <property type="entry name" value="LI-POR_suB-like_C"/>
</dbReference>
<dbReference type="InterPro" id="IPR000510">
    <property type="entry name" value="Nase/OxRdtase_comp1"/>
</dbReference>
<dbReference type="InterPro" id="IPR042298">
    <property type="entry name" value="P-CP_red_C"/>
</dbReference>
<dbReference type="InterPro" id="IPR005969">
    <property type="entry name" value="Protochl_reductB"/>
</dbReference>
<dbReference type="InterPro" id="IPR016209">
    <property type="entry name" value="Protochlorophyllide_Rdtase"/>
</dbReference>
<dbReference type="NCBIfam" id="TIGR01278">
    <property type="entry name" value="DPOR_BchB"/>
    <property type="match status" value="1"/>
</dbReference>
<dbReference type="NCBIfam" id="NF002789">
    <property type="entry name" value="PRK02910.1-3"/>
    <property type="match status" value="1"/>
</dbReference>
<dbReference type="PANTHER" id="PTHR33712">
    <property type="entry name" value="LIGHT-INDEPENDENT PROTOCHLOROPHYLLIDE REDUCTASE SUBUNIT B"/>
    <property type="match status" value="1"/>
</dbReference>
<dbReference type="PANTHER" id="PTHR33712:SF7">
    <property type="entry name" value="LIGHT-INDEPENDENT PROTOCHLOROPHYLLIDE REDUCTASE SUBUNIT B"/>
    <property type="match status" value="1"/>
</dbReference>
<dbReference type="Pfam" id="PF00148">
    <property type="entry name" value="Oxidored_nitro"/>
    <property type="match status" value="1"/>
</dbReference>
<dbReference type="Pfam" id="PF08369">
    <property type="entry name" value="PCP_red"/>
    <property type="match status" value="1"/>
</dbReference>
<dbReference type="PIRSF" id="PIRSF000163">
    <property type="entry name" value="PCP_ChlB"/>
    <property type="match status" value="1"/>
</dbReference>
<dbReference type="SUPFAM" id="SSF53807">
    <property type="entry name" value="Helical backbone' metal receptor"/>
    <property type="match status" value="1"/>
</dbReference>
<keyword id="KW-0004">4Fe-4S</keyword>
<keyword id="KW-0067">ATP-binding</keyword>
<keyword id="KW-0077">Bacteriochlorophyll biosynthesis</keyword>
<keyword id="KW-0149">Chlorophyll biosynthesis</keyword>
<keyword id="KW-0408">Iron</keyword>
<keyword id="KW-0411">Iron-sulfur</keyword>
<keyword id="KW-0479">Metal-binding</keyword>
<keyword id="KW-0547">Nucleotide-binding</keyword>
<keyword id="KW-0560">Oxidoreductase</keyword>
<keyword id="KW-0602">Photosynthesis</keyword>
<feature type="chain" id="PRO_1000120533" description="Light-independent protochlorophyllide reductase subunit B">
    <location>
        <begin position="1"/>
        <end position="533"/>
    </location>
</feature>
<feature type="active site" description="Proton donor" evidence="1">
    <location>
        <position position="292"/>
    </location>
</feature>
<feature type="binding site" evidence="1">
    <location>
        <position position="36"/>
    </location>
    <ligand>
        <name>[4Fe-4S] cluster</name>
        <dbReference type="ChEBI" id="CHEBI:49883"/>
        <note>ligand shared with heterodimeric partner</note>
    </ligand>
</feature>
<feature type="binding site" evidence="1">
    <location>
        <begin position="428"/>
        <end position="429"/>
    </location>
    <ligand>
        <name>substrate</name>
    </ligand>
</feature>
<gene>
    <name evidence="1" type="primary">bchB</name>
    <name type="ordered locus">Paes_2028</name>
</gene>
<evidence type="ECO:0000255" key="1">
    <source>
        <dbReference type="HAMAP-Rule" id="MF_00353"/>
    </source>
</evidence>